<dbReference type="EC" id="2.7.11.1" evidence="14"/>
<dbReference type="EMBL" id="GL456158">
    <property type="status" value="NOT_ANNOTATED_CDS"/>
    <property type="molecule type" value="Genomic_DNA"/>
</dbReference>
<dbReference type="EMBL" id="BC044882">
    <property type="protein sequence ID" value="AAH44882.2"/>
    <property type="status" value="ALT_INIT"/>
    <property type="molecule type" value="mRNA"/>
</dbReference>
<dbReference type="EMBL" id="BC060226">
    <property type="status" value="NOT_ANNOTATED_CDS"/>
    <property type="molecule type" value="mRNA"/>
</dbReference>
<dbReference type="EMBL" id="AY603754">
    <property type="protein sequence ID" value="AAT80900.1"/>
    <property type="molecule type" value="mRNA"/>
</dbReference>
<dbReference type="FunCoup" id="A2AAJ9">
    <property type="interactions" value="63"/>
</dbReference>
<dbReference type="IntAct" id="A2AAJ9">
    <property type="interactions" value="2"/>
</dbReference>
<dbReference type="STRING" id="10090.ENSMUSP00000038264"/>
<dbReference type="GlyGen" id="A2AAJ9">
    <property type="glycosylation" value="5 sites, 1 O-linked glycan (1 site)"/>
</dbReference>
<dbReference type="iPTMnet" id="A2AAJ9"/>
<dbReference type="PhosphoSitePlus" id="A2AAJ9"/>
<dbReference type="jPOST" id="A2AAJ9"/>
<dbReference type="PaxDb" id="10090-ENSMUSP00000038264"/>
<dbReference type="PeptideAtlas" id="A2AAJ9"/>
<dbReference type="ProteomicsDB" id="294057">
    <molecule id="A2AAJ9-1"/>
</dbReference>
<dbReference type="ProteomicsDB" id="294058">
    <molecule id="A2AAJ9-2"/>
</dbReference>
<dbReference type="ProteomicsDB" id="294059">
    <molecule id="A2AAJ9-3"/>
</dbReference>
<dbReference type="Antibodypedia" id="11615">
    <property type="antibodies" value="36 antibodies from 16 providers"/>
</dbReference>
<dbReference type="Ensembl" id="ENSMUST00000238536.2">
    <molecule id="A2AAJ9-1"/>
    <property type="protein sequence ID" value="ENSMUSP00000158795.2"/>
    <property type="gene ID" value="ENSMUSG00000061462.19"/>
</dbReference>
<dbReference type="AGR" id="MGI:2681862"/>
<dbReference type="MGI" id="MGI:2681862">
    <property type="gene designation" value="Obscn"/>
</dbReference>
<dbReference type="VEuPathDB" id="HostDB:ENSMUSG00000061462"/>
<dbReference type="eggNOG" id="KOG0032">
    <property type="taxonomic scope" value="Eukaryota"/>
</dbReference>
<dbReference type="eggNOG" id="KOG0613">
    <property type="taxonomic scope" value="Eukaryota"/>
</dbReference>
<dbReference type="eggNOG" id="KOG4475">
    <property type="taxonomic scope" value="Eukaryota"/>
</dbReference>
<dbReference type="GeneTree" id="ENSGT00940000154756"/>
<dbReference type="InParanoid" id="A2AAJ9"/>
<dbReference type="OMA" id="CYEVEKM"/>
<dbReference type="OrthoDB" id="10072266at2759"/>
<dbReference type="PhylomeDB" id="A2AAJ9"/>
<dbReference type="Reactome" id="R-MMU-193648">
    <property type="pathway name" value="NRAGE signals death through JNK"/>
</dbReference>
<dbReference type="Reactome" id="R-MMU-416482">
    <property type="pathway name" value="G alpha (12/13) signalling events"/>
</dbReference>
<dbReference type="Reactome" id="R-MMU-8980692">
    <property type="pathway name" value="RHOA GTPase cycle"/>
</dbReference>
<dbReference type="Reactome" id="R-MMU-9013406">
    <property type="pathway name" value="RHOQ GTPase cycle"/>
</dbReference>
<dbReference type="PRO" id="PR:A2AAJ9"/>
<dbReference type="Proteomes" id="UP000000589">
    <property type="component" value="Chromosome 11"/>
</dbReference>
<dbReference type="RNAct" id="A2AAJ9">
    <property type="molecule type" value="protein"/>
</dbReference>
<dbReference type="Bgee" id="ENSMUSG00000061462">
    <property type="expression patterns" value="Expressed in hindlimb stylopod muscle and 73 other cell types or tissues"/>
</dbReference>
<dbReference type="ExpressionAtlas" id="A2AAJ9">
    <property type="expression patterns" value="baseline and differential"/>
</dbReference>
<dbReference type="GO" id="GO:0005615">
    <property type="term" value="C:extracellular space"/>
    <property type="evidence" value="ECO:0000314"/>
    <property type="project" value="UniProtKB"/>
</dbReference>
<dbReference type="GO" id="GO:0014704">
    <property type="term" value="C:intercalated disc"/>
    <property type="evidence" value="ECO:0000314"/>
    <property type="project" value="UniProtKB"/>
</dbReference>
<dbReference type="GO" id="GO:0031430">
    <property type="term" value="C:M band"/>
    <property type="evidence" value="ECO:0000314"/>
    <property type="project" value="UniProtKB"/>
</dbReference>
<dbReference type="GO" id="GO:0005634">
    <property type="term" value="C:nucleus"/>
    <property type="evidence" value="ECO:0007669"/>
    <property type="project" value="UniProtKB-SubCell"/>
</dbReference>
<dbReference type="GO" id="GO:0005886">
    <property type="term" value="C:plasma membrane"/>
    <property type="evidence" value="ECO:0000314"/>
    <property type="project" value="UniProtKB"/>
</dbReference>
<dbReference type="GO" id="GO:0042383">
    <property type="term" value="C:sarcolemma"/>
    <property type="evidence" value="ECO:0000314"/>
    <property type="project" value="UniProtKB"/>
</dbReference>
<dbReference type="GO" id="GO:0005863">
    <property type="term" value="C:striated muscle myosin thick filament"/>
    <property type="evidence" value="ECO:0000266"/>
    <property type="project" value="MGI"/>
</dbReference>
<dbReference type="GO" id="GO:0030018">
    <property type="term" value="C:Z disc"/>
    <property type="evidence" value="ECO:0000314"/>
    <property type="project" value="UniProtKB"/>
</dbReference>
<dbReference type="GO" id="GO:0030506">
    <property type="term" value="F:ankyrin binding"/>
    <property type="evidence" value="ECO:0000266"/>
    <property type="project" value="MGI"/>
</dbReference>
<dbReference type="GO" id="GO:0005524">
    <property type="term" value="F:ATP binding"/>
    <property type="evidence" value="ECO:0007669"/>
    <property type="project" value="UniProtKB-KW"/>
</dbReference>
<dbReference type="GO" id="GO:0045296">
    <property type="term" value="F:cadherin binding"/>
    <property type="evidence" value="ECO:0000353"/>
    <property type="project" value="UniProtKB"/>
</dbReference>
<dbReference type="GO" id="GO:0005516">
    <property type="term" value="F:calmodulin binding"/>
    <property type="evidence" value="ECO:0007669"/>
    <property type="project" value="UniProtKB-KW"/>
</dbReference>
<dbReference type="GO" id="GO:0005085">
    <property type="term" value="F:guanyl-nucleotide exchange factor activity"/>
    <property type="evidence" value="ECO:0007669"/>
    <property type="project" value="InterPro"/>
</dbReference>
<dbReference type="GO" id="GO:0046872">
    <property type="term" value="F:metal ion binding"/>
    <property type="evidence" value="ECO:0007669"/>
    <property type="project" value="UniProtKB-KW"/>
</dbReference>
<dbReference type="GO" id="GO:1902936">
    <property type="term" value="F:phosphatidylinositol bisphosphate binding"/>
    <property type="evidence" value="ECO:0000314"/>
    <property type="project" value="UniProtKB"/>
</dbReference>
<dbReference type="GO" id="GO:0005547">
    <property type="term" value="F:phosphatidylinositol-3,4,5-trisphosphate binding"/>
    <property type="evidence" value="ECO:0000250"/>
    <property type="project" value="UniProtKB"/>
</dbReference>
<dbReference type="GO" id="GO:0043325">
    <property type="term" value="F:phosphatidylinositol-3,4-bisphosphate binding"/>
    <property type="evidence" value="ECO:0000250"/>
    <property type="project" value="UniProtKB"/>
</dbReference>
<dbReference type="GO" id="GO:0032266">
    <property type="term" value="F:phosphatidylinositol-3-phosphate binding"/>
    <property type="evidence" value="ECO:0000250"/>
    <property type="project" value="UniProtKB"/>
</dbReference>
<dbReference type="GO" id="GO:0005546">
    <property type="term" value="F:phosphatidylinositol-4,5-bisphosphate binding"/>
    <property type="evidence" value="ECO:0000250"/>
    <property type="project" value="UniProtKB"/>
</dbReference>
<dbReference type="GO" id="GO:0070273">
    <property type="term" value="F:phosphatidylinositol-4-phosphate binding"/>
    <property type="evidence" value="ECO:0000250"/>
    <property type="project" value="UniProtKB"/>
</dbReference>
<dbReference type="GO" id="GO:0010314">
    <property type="term" value="F:phosphatidylinositol-5-phosphate binding"/>
    <property type="evidence" value="ECO:0000250"/>
    <property type="project" value="UniProtKB"/>
</dbReference>
<dbReference type="GO" id="GO:0004672">
    <property type="term" value="F:protein kinase activity"/>
    <property type="evidence" value="ECO:0000314"/>
    <property type="project" value="UniProtKB"/>
</dbReference>
<dbReference type="GO" id="GO:0106310">
    <property type="term" value="F:protein serine kinase activity"/>
    <property type="evidence" value="ECO:0007669"/>
    <property type="project" value="RHEA"/>
</dbReference>
<dbReference type="GO" id="GO:0004674">
    <property type="term" value="F:protein serine/threonine kinase activity"/>
    <property type="evidence" value="ECO:0007669"/>
    <property type="project" value="UniProtKB-KW"/>
</dbReference>
<dbReference type="GO" id="GO:0030154">
    <property type="term" value="P:cell differentiation"/>
    <property type="evidence" value="ECO:0007669"/>
    <property type="project" value="UniProtKB-KW"/>
</dbReference>
<dbReference type="GO" id="GO:0051898">
    <property type="term" value="P:negative regulation of phosphatidylinositol 3-kinase/protein kinase B signal transduction"/>
    <property type="evidence" value="ECO:0000314"/>
    <property type="project" value="UniProtKB"/>
</dbReference>
<dbReference type="GO" id="GO:0046777">
    <property type="term" value="P:protein autophosphorylation"/>
    <property type="evidence" value="ECO:0000314"/>
    <property type="project" value="UniProtKB"/>
</dbReference>
<dbReference type="GO" id="GO:0006468">
    <property type="term" value="P:protein phosphorylation"/>
    <property type="evidence" value="ECO:0000314"/>
    <property type="project" value="UniProtKB"/>
</dbReference>
<dbReference type="CDD" id="cd00063">
    <property type="entry name" value="FN3"/>
    <property type="match status" value="2"/>
</dbReference>
<dbReference type="CDD" id="cd00096">
    <property type="entry name" value="Ig"/>
    <property type="match status" value="5"/>
</dbReference>
<dbReference type="CDD" id="cd20971">
    <property type="entry name" value="IgI_1_Titin-A168_like"/>
    <property type="match status" value="1"/>
</dbReference>
<dbReference type="CDD" id="cd23767">
    <property type="entry name" value="IQCD"/>
    <property type="match status" value="1"/>
</dbReference>
<dbReference type="CDD" id="cd13239">
    <property type="entry name" value="PH_Obscurin"/>
    <property type="match status" value="1"/>
</dbReference>
<dbReference type="CDD" id="cd12025">
    <property type="entry name" value="SH3_Obscurin_like"/>
    <property type="match status" value="1"/>
</dbReference>
<dbReference type="FunFam" id="2.60.40.10:FF:000421">
    <property type="entry name" value="LOW QUALITY PROTEIN: obscurin"/>
    <property type="match status" value="3"/>
</dbReference>
<dbReference type="FunFam" id="3.30.200.20:FF:000501">
    <property type="entry name" value="Obscurin isoform B"/>
    <property type="match status" value="1"/>
</dbReference>
<dbReference type="FunFam" id="1.10.510.10:FF:000912">
    <property type="entry name" value="obscurin isoform X1"/>
    <property type="match status" value="1"/>
</dbReference>
<dbReference type="FunFam" id="2.30.30.40:FF:000124">
    <property type="entry name" value="obscurin isoform X2"/>
    <property type="match status" value="1"/>
</dbReference>
<dbReference type="FunFam" id="2.60.40.10:FF:000380">
    <property type="entry name" value="obscurin isoform X3"/>
    <property type="match status" value="1"/>
</dbReference>
<dbReference type="FunFam" id="2.60.40.10:FF:000599">
    <property type="entry name" value="obscurin isoform X3"/>
    <property type="match status" value="1"/>
</dbReference>
<dbReference type="FunFam" id="2.60.40.10:FF:000652">
    <property type="entry name" value="obscurin isoform X3"/>
    <property type="match status" value="1"/>
</dbReference>
<dbReference type="FunFam" id="2.60.40.10:FF:000988">
    <property type="entry name" value="obscurin isoform X3"/>
    <property type="match status" value="1"/>
</dbReference>
<dbReference type="FunFam" id="2.60.40.10:FF:000228">
    <property type="entry name" value="obscurin isoform X4"/>
    <property type="match status" value="9"/>
</dbReference>
<dbReference type="FunFam" id="2.60.40.10:FF:000523">
    <property type="entry name" value="obscurin isoform X4"/>
    <property type="match status" value="1"/>
</dbReference>
<dbReference type="FunFam" id="2.60.40.10:FF:000773">
    <property type="entry name" value="obscurin isoform X4"/>
    <property type="match status" value="1"/>
</dbReference>
<dbReference type="FunFam" id="2.60.40.10:FF:000841">
    <property type="entry name" value="obscurin isoform X4"/>
    <property type="match status" value="1"/>
</dbReference>
<dbReference type="FunFam" id="2.60.40.10:FF:001071">
    <property type="entry name" value="obscurin isoform X4"/>
    <property type="match status" value="1"/>
</dbReference>
<dbReference type="FunFam" id="2.30.29.30:FF:000197">
    <property type="entry name" value="obscurin isoform X5"/>
    <property type="match status" value="1"/>
</dbReference>
<dbReference type="FunFam" id="2.60.40.10:FF:000109">
    <property type="entry name" value="obscurin isoform X5"/>
    <property type="match status" value="6"/>
</dbReference>
<dbReference type="FunFam" id="3.30.200.20:FF:000424">
    <property type="entry name" value="obscurin isoform X5"/>
    <property type="match status" value="1"/>
</dbReference>
<dbReference type="FunFam" id="2.60.40.10:FF:000747">
    <property type="entry name" value="obscurin isoform X6"/>
    <property type="match status" value="1"/>
</dbReference>
<dbReference type="FunFam" id="2.60.40.10:FF:000903">
    <property type="entry name" value="obscurin isoform X6"/>
    <property type="match status" value="1"/>
</dbReference>
<dbReference type="FunFam" id="1.10.510.10:FF:000519">
    <property type="entry name" value="Obscurin, cytoskeletal calmodulin and titin-interacting RhoGEF"/>
    <property type="match status" value="1"/>
</dbReference>
<dbReference type="FunFam" id="1.20.900.10:FF:000027">
    <property type="entry name" value="Obscurin, cytoskeletal calmodulin and titin-interacting RhoGEF"/>
    <property type="match status" value="1"/>
</dbReference>
<dbReference type="FunFam" id="2.60.40.10:FF:000075">
    <property type="entry name" value="Obscurin, cytoskeletal calmodulin and titin-interacting RhoGEF"/>
    <property type="match status" value="14"/>
</dbReference>
<dbReference type="FunFam" id="2.60.40.10:FF:000707">
    <property type="entry name" value="Obscurin, cytoskeletal calmodulin and titin-interacting RhoGEF"/>
    <property type="match status" value="1"/>
</dbReference>
<dbReference type="FunFam" id="2.60.40.10:FF:000837">
    <property type="entry name" value="Obscurin, cytoskeletal calmodulin and titin-interacting RhoGEF"/>
    <property type="match status" value="1"/>
</dbReference>
<dbReference type="FunFam" id="2.60.40.10:FF:000866">
    <property type="entry name" value="Obscurin, cytoskeletal calmodulin and titin-interacting RhoGEF"/>
    <property type="match status" value="1"/>
</dbReference>
<dbReference type="FunFam" id="2.60.40.10:FF:000872">
    <property type="entry name" value="Obscurin, cytoskeletal calmodulin and titin-interacting RhoGEF"/>
    <property type="match status" value="1"/>
</dbReference>
<dbReference type="FunFam" id="2.60.40.10:FF:000881">
    <property type="entry name" value="Obscurin, cytoskeletal calmodulin and titin-interacting RhoGEF"/>
    <property type="match status" value="1"/>
</dbReference>
<dbReference type="FunFam" id="2.60.40.10:FF:000898">
    <property type="entry name" value="Obscurin, cytoskeletal calmodulin and titin-interacting RhoGEF"/>
    <property type="match status" value="1"/>
</dbReference>
<dbReference type="FunFam" id="2.60.40.10:FF:000917">
    <property type="entry name" value="Obscurin, cytoskeletal calmodulin and titin-interacting RhoGEF"/>
    <property type="match status" value="1"/>
</dbReference>
<dbReference type="FunFam" id="2.60.40.10:FF:000954">
    <property type="entry name" value="Obscurin, cytoskeletal calmodulin and titin-interacting RhoGEF"/>
    <property type="match status" value="1"/>
</dbReference>
<dbReference type="FunFam" id="2.60.40.10:FF:000965">
    <property type="entry name" value="Obscurin, cytoskeletal calmodulin and titin-interacting RhoGEF"/>
    <property type="match status" value="1"/>
</dbReference>
<dbReference type="FunFam" id="2.60.40.10:FF:000979">
    <property type="entry name" value="Obscurin, cytoskeletal calmodulin and titin-interacting RhoGEF"/>
    <property type="match status" value="1"/>
</dbReference>
<dbReference type="FunFam" id="2.60.40.10:FF:000989">
    <property type="entry name" value="Obscurin, cytoskeletal calmodulin and titin-interacting RhoGEF"/>
    <property type="match status" value="1"/>
</dbReference>
<dbReference type="FunFam" id="2.60.40.10:FF:001032">
    <property type="entry name" value="Obscurin, cytoskeletal calmodulin and titin-interacting RhoGEF"/>
    <property type="match status" value="1"/>
</dbReference>
<dbReference type="FunFam" id="2.60.40.10:FF:001055">
    <property type="entry name" value="Obscurin, cytoskeletal calmodulin and titin-interacting RhoGEF"/>
    <property type="match status" value="1"/>
</dbReference>
<dbReference type="FunFam" id="2.60.40.10:FF:001103">
    <property type="entry name" value="Obscurin, cytoskeletal calmodulin and titin-interacting RhoGEF"/>
    <property type="match status" value="1"/>
</dbReference>
<dbReference type="FunFam" id="2.60.40.10:FF:001136">
    <property type="entry name" value="Obscurin, cytoskeletal calmodulin and titin-interacting RhoGEF"/>
    <property type="match status" value="1"/>
</dbReference>
<dbReference type="FunFam" id="2.60.40.10:FF:001212">
    <property type="entry name" value="Obscurin, cytoskeletal calmodulin and titin-interacting RhoGEF"/>
    <property type="match status" value="1"/>
</dbReference>
<dbReference type="FunFam" id="2.60.40.10:FF:001214">
    <property type="entry name" value="Obscurin, cytoskeletal calmodulin and titin-interacting RhoGEF"/>
    <property type="match status" value="1"/>
</dbReference>
<dbReference type="FunFam" id="2.60.40.10:FF:001295">
    <property type="entry name" value="Obscurin, cytoskeletal calmodulin and titin-interacting RhoGEF"/>
    <property type="match status" value="1"/>
</dbReference>
<dbReference type="FunFam" id="2.60.40.10:FF:001314">
    <property type="entry name" value="Obscurin, cytoskeletal calmodulin and titin-interacting RhoGEF"/>
    <property type="match status" value="1"/>
</dbReference>
<dbReference type="FunFam" id="2.60.40.10:FF:000032">
    <property type="entry name" value="palladin isoform X1"/>
    <property type="match status" value="1"/>
</dbReference>
<dbReference type="FunFam" id="2.60.40.10:FF:000050">
    <property type="entry name" value="Titin isoform B"/>
    <property type="match status" value="3"/>
</dbReference>
<dbReference type="FunFam" id="2.60.40.10:FF:000148">
    <property type="entry name" value="titin isoform X1"/>
    <property type="match status" value="1"/>
</dbReference>
<dbReference type="FunFam" id="2.60.40.10:FF:001652">
    <property type="entry name" value="Uncharacterized protein"/>
    <property type="match status" value="2"/>
</dbReference>
<dbReference type="Gene3D" id="1.20.900.10">
    <property type="entry name" value="Dbl homology (DH) domain"/>
    <property type="match status" value="1"/>
</dbReference>
<dbReference type="Gene3D" id="2.60.40.10">
    <property type="entry name" value="Immunoglobulins"/>
    <property type="match status" value="70"/>
</dbReference>
<dbReference type="Gene3D" id="3.30.200.20">
    <property type="entry name" value="Phosphorylase Kinase, domain 1"/>
    <property type="match status" value="2"/>
</dbReference>
<dbReference type="Gene3D" id="2.30.29.30">
    <property type="entry name" value="Pleckstrin-homology domain (PH domain)/Phosphotyrosine-binding domain (PTB)"/>
    <property type="match status" value="1"/>
</dbReference>
<dbReference type="Gene3D" id="2.30.30.40">
    <property type="entry name" value="SH3 Domains"/>
    <property type="match status" value="1"/>
</dbReference>
<dbReference type="Gene3D" id="1.10.510.10">
    <property type="entry name" value="Transferase(Phosphotransferase) domain 1"/>
    <property type="match status" value="2"/>
</dbReference>
<dbReference type="InterPro" id="IPR035899">
    <property type="entry name" value="DBL_dom_sf"/>
</dbReference>
<dbReference type="InterPro" id="IPR000219">
    <property type="entry name" value="DH_dom"/>
</dbReference>
<dbReference type="InterPro" id="IPR003961">
    <property type="entry name" value="FN3_dom"/>
</dbReference>
<dbReference type="InterPro" id="IPR036116">
    <property type="entry name" value="FN3_sf"/>
</dbReference>
<dbReference type="InterPro" id="IPR007110">
    <property type="entry name" value="Ig-like_dom"/>
</dbReference>
<dbReference type="InterPro" id="IPR036179">
    <property type="entry name" value="Ig-like_dom_sf"/>
</dbReference>
<dbReference type="InterPro" id="IPR013783">
    <property type="entry name" value="Ig-like_fold"/>
</dbReference>
<dbReference type="InterPro" id="IPR013098">
    <property type="entry name" value="Ig_I-set"/>
</dbReference>
<dbReference type="InterPro" id="IPR003599">
    <property type="entry name" value="Ig_sub"/>
</dbReference>
<dbReference type="InterPro" id="IPR003598">
    <property type="entry name" value="Ig_sub2"/>
</dbReference>
<dbReference type="InterPro" id="IPR013106">
    <property type="entry name" value="Ig_V-set"/>
</dbReference>
<dbReference type="InterPro" id="IPR000048">
    <property type="entry name" value="IQ_motif_EF-hand-BS"/>
</dbReference>
<dbReference type="InterPro" id="IPR011009">
    <property type="entry name" value="Kinase-like_dom_sf"/>
</dbReference>
<dbReference type="InterPro" id="IPR052385">
    <property type="entry name" value="Obscurin/Obscurin-like_Reg"/>
</dbReference>
<dbReference type="InterPro" id="IPR035526">
    <property type="entry name" value="Obscurin_SH3"/>
</dbReference>
<dbReference type="InterPro" id="IPR011993">
    <property type="entry name" value="PH-like_dom_sf"/>
</dbReference>
<dbReference type="InterPro" id="IPR001849">
    <property type="entry name" value="PH_domain"/>
</dbReference>
<dbReference type="InterPro" id="IPR000719">
    <property type="entry name" value="Prot_kinase_dom"/>
</dbReference>
<dbReference type="InterPro" id="IPR017441">
    <property type="entry name" value="Protein_kinase_ATP_BS"/>
</dbReference>
<dbReference type="InterPro" id="IPR008271">
    <property type="entry name" value="Ser/Thr_kinase_AS"/>
</dbReference>
<dbReference type="InterPro" id="IPR036028">
    <property type="entry name" value="SH3-like_dom_sf"/>
</dbReference>
<dbReference type="InterPro" id="IPR001452">
    <property type="entry name" value="SH3_domain"/>
</dbReference>
<dbReference type="InterPro" id="IPR055251">
    <property type="entry name" value="SOS1_NGEF_PH"/>
</dbReference>
<dbReference type="InterPro" id="IPR008266">
    <property type="entry name" value="Tyr_kinase_AS"/>
</dbReference>
<dbReference type="PANTHER" id="PTHR35971:SF4">
    <property type="entry name" value="OBSCURIN"/>
    <property type="match status" value="1"/>
</dbReference>
<dbReference type="PANTHER" id="PTHR35971">
    <property type="entry name" value="SI:DKEY-31G6.6"/>
    <property type="match status" value="1"/>
</dbReference>
<dbReference type="Pfam" id="PF00041">
    <property type="entry name" value="fn3"/>
    <property type="match status" value="2"/>
</dbReference>
<dbReference type="Pfam" id="PF07679">
    <property type="entry name" value="I-set"/>
    <property type="match status" value="61"/>
</dbReference>
<dbReference type="Pfam" id="PF00612">
    <property type="entry name" value="IQ"/>
    <property type="match status" value="1"/>
</dbReference>
<dbReference type="Pfam" id="PF00069">
    <property type="entry name" value="Pkinase"/>
    <property type="match status" value="2"/>
</dbReference>
<dbReference type="Pfam" id="PF00621">
    <property type="entry name" value="RhoGEF"/>
    <property type="match status" value="1"/>
</dbReference>
<dbReference type="Pfam" id="PF22697">
    <property type="entry name" value="SOS1_NGEF_PH"/>
    <property type="match status" value="1"/>
</dbReference>
<dbReference type="SMART" id="SM00060">
    <property type="entry name" value="FN3"/>
    <property type="match status" value="3"/>
</dbReference>
<dbReference type="SMART" id="SM00409">
    <property type="entry name" value="IG"/>
    <property type="match status" value="64"/>
</dbReference>
<dbReference type="SMART" id="SM00408">
    <property type="entry name" value="IGc2"/>
    <property type="match status" value="58"/>
</dbReference>
<dbReference type="SMART" id="SM00406">
    <property type="entry name" value="IGv"/>
    <property type="match status" value="13"/>
</dbReference>
<dbReference type="SMART" id="SM00015">
    <property type="entry name" value="IQ"/>
    <property type="match status" value="1"/>
</dbReference>
<dbReference type="SMART" id="SM00233">
    <property type="entry name" value="PH"/>
    <property type="match status" value="1"/>
</dbReference>
<dbReference type="SMART" id="SM00325">
    <property type="entry name" value="RhoGEF"/>
    <property type="match status" value="1"/>
</dbReference>
<dbReference type="SMART" id="SM00220">
    <property type="entry name" value="S_TKc"/>
    <property type="match status" value="2"/>
</dbReference>
<dbReference type="SUPFAM" id="SSF48065">
    <property type="entry name" value="DBL homology domain (DH-domain)"/>
    <property type="match status" value="1"/>
</dbReference>
<dbReference type="SUPFAM" id="SSF49265">
    <property type="entry name" value="Fibronectin type III"/>
    <property type="match status" value="3"/>
</dbReference>
<dbReference type="SUPFAM" id="SSF48726">
    <property type="entry name" value="Immunoglobulin"/>
    <property type="match status" value="66"/>
</dbReference>
<dbReference type="SUPFAM" id="SSF50729">
    <property type="entry name" value="PH domain-like"/>
    <property type="match status" value="1"/>
</dbReference>
<dbReference type="SUPFAM" id="SSF56112">
    <property type="entry name" value="Protein kinase-like (PK-like)"/>
    <property type="match status" value="2"/>
</dbReference>
<dbReference type="SUPFAM" id="SSF50044">
    <property type="entry name" value="SH3-domain"/>
    <property type="match status" value="1"/>
</dbReference>
<dbReference type="PROSITE" id="PS50010">
    <property type="entry name" value="DH_2"/>
    <property type="match status" value="1"/>
</dbReference>
<dbReference type="PROSITE" id="PS50853">
    <property type="entry name" value="FN3"/>
    <property type="match status" value="3"/>
</dbReference>
<dbReference type="PROSITE" id="PS50835">
    <property type="entry name" value="IG_LIKE"/>
    <property type="match status" value="56"/>
</dbReference>
<dbReference type="PROSITE" id="PS50096">
    <property type="entry name" value="IQ"/>
    <property type="match status" value="1"/>
</dbReference>
<dbReference type="PROSITE" id="PS50003">
    <property type="entry name" value="PH_DOMAIN"/>
    <property type="match status" value="1"/>
</dbReference>
<dbReference type="PROSITE" id="PS00107">
    <property type="entry name" value="PROTEIN_KINASE_ATP"/>
    <property type="match status" value="1"/>
</dbReference>
<dbReference type="PROSITE" id="PS50011">
    <property type="entry name" value="PROTEIN_KINASE_DOM"/>
    <property type="match status" value="2"/>
</dbReference>
<dbReference type="PROSITE" id="PS00108">
    <property type="entry name" value="PROTEIN_KINASE_ST"/>
    <property type="match status" value="1"/>
</dbReference>
<dbReference type="PROSITE" id="PS00109">
    <property type="entry name" value="PROTEIN_KINASE_TYR"/>
    <property type="match status" value="1"/>
</dbReference>
<dbReference type="PROSITE" id="PS50002">
    <property type="entry name" value="SH3"/>
    <property type="match status" value="1"/>
</dbReference>
<gene>
    <name evidence="20" type="primary">Obscn</name>
    <name type="synonym">Gm878</name>
</gene>
<feature type="chain" id="PRO_0000296296" description="Obscurin">
    <location>
        <begin position="1"/>
        <end position="8886"/>
    </location>
</feature>
<feature type="domain" description="Ig-like 1" evidence="3">
    <location>
        <begin position="9"/>
        <end position="99"/>
    </location>
</feature>
<feature type="domain" description="Ig-like 2" evidence="3">
    <location>
        <begin position="109"/>
        <end position="201"/>
    </location>
</feature>
<feature type="domain" description="Ig-like 3" evidence="3">
    <location>
        <begin position="234"/>
        <end position="320"/>
    </location>
</feature>
<feature type="domain" description="Ig-like 4" evidence="3">
    <location>
        <begin position="329"/>
        <end position="415"/>
    </location>
</feature>
<feature type="domain" description="Fibronectin type-III 1" evidence="10">
    <location>
        <begin position="513"/>
        <end position="610"/>
    </location>
</feature>
<feature type="domain" description="Ig-like 5" evidence="3">
    <location>
        <begin position="702"/>
        <end position="793"/>
    </location>
</feature>
<feature type="domain" description="Ig-like 6" evidence="3">
    <location>
        <begin position="859"/>
        <end position="951"/>
    </location>
</feature>
<feature type="domain" description="Ig-like 7" evidence="3">
    <location>
        <begin position="951"/>
        <end position="1043"/>
    </location>
</feature>
<feature type="domain" description="Ig-like 8" evidence="3">
    <location>
        <begin position="1043"/>
        <end position="1135"/>
    </location>
</feature>
<feature type="domain" description="Ig-like 9" evidence="3">
    <location>
        <begin position="1135"/>
        <end position="1227"/>
    </location>
</feature>
<feature type="domain" description="Ig-like 10" evidence="3">
    <location>
        <begin position="1227"/>
        <end position="1319"/>
    </location>
</feature>
<feature type="domain" description="Ig-like 11" evidence="3">
    <location>
        <begin position="1319"/>
        <end position="1407"/>
    </location>
</feature>
<feature type="domain" description="Ig-like 12" evidence="3">
    <location>
        <begin position="1411"/>
        <end position="1503"/>
    </location>
</feature>
<feature type="domain" description="Ig-like 13" evidence="3">
    <location>
        <begin position="1503"/>
        <end position="1595"/>
    </location>
</feature>
<feature type="domain" description="Ig-like 14" evidence="3">
    <location>
        <begin position="1595"/>
        <end position="1687"/>
    </location>
</feature>
<feature type="domain" description="Ig-like 15" evidence="3">
    <location>
        <begin position="1687"/>
        <end position="1779"/>
    </location>
</feature>
<feature type="domain" description="Ig-like 16" evidence="3">
    <location>
        <begin position="1779"/>
        <end position="1871"/>
    </location>
</feature>
<feature type="domain" description="Ig-like 17" evidence="3">
    <location>
        <begin position="1871"/>
        <end position="1963"/>
    </location>
</feature>
<feature type="domain" description="Ig-like 18" evidence="3">
    <location>
        <begin position="1963"/>
        <end position="2051"/>
    </location>
</feature>
<feature type="domain" description="Ig-like 19" evidence="3">
    <location>
        <begin position="2055"/>
        <end position="2147"/>
    </location>
</feature>
<feature type="domain" description="Ig-like 20" evidence="3">
    <location>
        <begin position="2152"/>
        <end position="2241"/>
    </location>
</feature>
<feature type="domain" description="Ig-like 21" evidence="3">
    <location>
        <begin position="2242"/>
        <end position="2325"/>
    </location>
</feature>
<feature type="domain" description="Ig-like 22" evidence="3">
    <location>
        <begin position="2329"/>
        <end position="2415"/>
    </location>
</feature>
<feature type="domain" description="Ig-like 23" evidence="3">
    <location>
        <begin position="2420"/>
        <end position="2504"/>
    </location>
</feature>
<feature type="domain" description="Ig-like 24" evidence="3">
    <location>
        <begin position="2598"/>
        <end position="2681"/>
    </location>
</feature>
<feature type="domain" description="Ig-like 25" evidence="3">
    <location>
        <begin position="2721"/>
        <end position="2812"/>
    </location>
</feature>
<feature type="domain" description="Ig-like 26" evidence="3">
    <location>
        <begin position="2900"/>
        <end position="2984"/>
    </location>
</feature>
<feature type="domain" description="Ig-like 27" evidence="3">
    <location>
        <begin position="3078"/>
        <end position="3162"/>
    </location>
</feature>
<feature type="domain" description="Ig-like 28" evidence="3">
    <location>
        <begin position="3258"/>
        <end position="3342"/>
    </location>
</feature>
<feature type="domain" description="Ig-like 29" evidence="3">
    <location>
        <begin position="3348"/>
        <end position="3431"/>
    </location>
</feature>
<feature type="domain" description="Ig-like 30" evidence="3">
    <location>
        <begin position="3527"/>
        <end position="3610"/>
    </location>
</feature>
<feature type="domain" description="Ig-like 31" evidence="3">
    <location>
        <begin position="3616"/>
        <end position="3700"/>
    </location>
</feature>
<feature type="domain" description="Ig-like 32" evidence="3">
    <location>
        <begin position="3785"/>
        <end position="3876"/>
    </location>
</feature>
<feature type="domain" description="Ig-like 33" evidence="3">
    <location>
        <begin position="3881"/>
        <end position="3964"/>
    </location>
</feature>
<feature type="domain" description="Ig-like 34" evidence="3">
    <location>
        <begin position="4042"/>
        <end position="4125"/>
    </location>
</feature>
<feature type="domain" description="Ig-like 35" evidence="3">
    <location>
        <begin position="4130"/>
        <end position="4213"/>
    </location>
</feature>
<feature type="domain" description="Ig-like 36" evidence="3">
    <location>
        <begin position="4219"/>
        <end position="4301"/>
    </location>
</feature>
<feature type="domain" description="Ig-like 37" evidence="3">
    <location>
        <begin position="4307"/>
        <end position="4389"/>
    </location>
</feature>
<feature type="domain" description="Ig-like 38" evidence="3">
    <location>
        <begin position="4395"/>
        <end position="4477"/>
    </location>
</feature>
<feature type="domain" description="Ig-like 39" evidence="3">
    <location>
        <begin position="4483"/>
        <end position="4565"/>
    </location>
</feature>
<feature type="domain" description="Ig-like 40" evidence="3">
    <location>
        <begin position="4571"/>
        <end position="4653"/>
    </location>
</feature>
<feature type="domain" description="Ig-like 41" evidence="3">
    <location>
        <begin position="4659"/>
        <end position="4741"/>
    </location>
</feature>
<feature type="domain" description="Ig-like 42" evidence="3">
    <location>
        <begin position="4746"/>
        <end position="4829"/>
    </location>
</feature>
<feature type="domain" description="Ig-like 43" evidence="3">
    <location>
        <begin position="4833"/>
        <end position="4916"/>
    </location>
</feature>
<feature type="domain" description="Ig-like 44" evidence="3">
    <location>
        <begin position="4923"/>
        <end position="5007"/>
    </location>
</feature>
<feature type="domain" description="Ig-like 45" evidence="3">
    <location>
        <begin position="5013"/>
        <end position="5105"/>
    </location>
</feature>
<feature type="domain" description="Ig-like 46" evidence="3">
    <location>
        <begin position="5378"/>
        <end position="5464"/>
    </location>
</feature>
<feature type="domain" description="Fibronectin type-III 2" evidence="10">
    <location>
        <begin position="5471"/>
        <end position="5569"/>
    </location>
</feature>
<feature type="domain" description="Ig-like 47" evidence="3">
    <location>
        <begin position="5557"/>
        <end position="5659"/>
    </location>
</feature>
<feature type="domain" description="IQ" evidence="6">
    <location>
        <begin position="5821"/>
        <end position="5850"/>
    </location>
</feature>
<feature type="domain" description="Ig-like 48" evidence="3">
    <location>
        <begin position="5847"/>
        <end position="5930"/>
    </location>
</feature>
<feature type="domain" description="Ig-like 49" evidence="3">
    <location>
        <begin position="6077"/>
        <end position="6166"/>
    </location>
</feature>
<feature type="domain" description="Ig-like 50" evidence="3">
    <location>
        <begin position="6209"/>
        <end position="6298"/>
    </location>
</feature>
<feature type="domain" description="Ig-like 51" evidence="3">
    <location>
        <begin position="6320"/>
        <end position="6416"/>
    </location>
</feature>
<feature type="domain" description="SH3" evidence="9">
    <location>
        <begin position="6549"/>
        <end position="6616"/>
    </location>
</feature>
<feature type="domain" description="DH" evidence="4">
    <location>
        <begin position="6642"/>
        <end position="6826"/>
    </location>
</feature>
<feature type="domain" description="PH" evidence="7">
    <location>
        <begin position="6844"/>
        <end position="6953"/>
    </location>
</feature>
<feature type="domain" description="Ig-like 52" evidence="3">
    <location>
        <begin position="6963"/>
        <end position="7046"/>
    </location>
</feature>
<feature type="domain" description="Ig-like 53" evidence="3">
    <location>
        <begin position="7057"/>
        <end position="7147"/>
    </location>
</feature>
<feature type="domain" description="Ig-like 54" evidence="3">
    <location>
        <begin position="7306"/>
        <end position="7394"/>
    </location>
</feature>
<feature type="domain" description="Protein kinase 1" evidence="8">
    <location>
        <begin position="7416"/>
        <end position="7669"/>
    </location>
</feature>
<feature type="domain" description="Ig-like 55" evidence="3">
    <location>
        <begin position="8380"/>
        <end position="8464"/>
    </location>
</feature>
<feature type="domain" description="Fibronectin type-III 3" evidence="10">
    <location>
        <begin position="8474"/>
        <end position="8566"/>
    </location>
</feature>
<feature type="domain" description="Protein kinase 2" evidence="8">
    <location>
        <begin position="8590"/>
        <end position="8842"/>
    </location>
</feature>
<feature type="region of interest" description="Disordered" evidence="11">
    <location>
        <begin position="135"/>
        <end position="165"/>
    </location>
</feature>
<feature type="region of interest" description="Disordered" evidence="11">
    <location>
        <begin position="5700"/>
        <end position="5736"/>
    </location>
</feature>
<feature type="region of interest" description="Disordered" evidence="11">
    <location>
        <begin position="5977"/>
        <end position="5996"/>
    </location>
</feature>
<feature type="region of interest" description="Disordered" evidence="11">
    <location>
        <begin position="6504"/>
        <end position="6546"/>
    </location>
</feature>
<feature type="region of interest" description="Disordered" evidence="11">
    <location>
        <begin position="7200"/>
        <end position="7257"/>
    </location>
</feature>
<feature type="region of interest" description="Disordered" evidence="11">
    <location>
        <begin position="7717"/>
        <end position="7810"/>
    </location>
</feature>
<feature type="region of interest" description="Disordered" evidence="11">
    <location>
        <begin position="7879"/>
        <end position="8106"/>
    </location>
</feature>
<feature type="region of interest" description="Disordered" evidence="11">
    <location>
        <begin position="8150"/>
        <end position="8180"/>
    </location>
</feature>
<feature type="compositionally biased region" description="Basic and acidic residues" evidence="11">
    <location>
        <begin position="144"/>
        <end position="164"/>
    </location>
</feature>
<feature type="compositionally biased region" description="Basic and acidic residues" evidence="11">
    <location>
        <begin position="5713"/>
        <end position="5724"/>
    </location>
</feature>
<feature type="compositionally biased region" description="Low complexity" evidence="11">
    <location>
        <begin position="6519"/>
        <end position="6538"/>
    </location>
</feature>
<feature type="compositionally biased region" description="Polar residues" evidence="11">
    <location>
        <begin position="7247"/>
        <end position="7257"/>
    </location>
</feature>
<feature type="compositionally biased region" description="Low complexity" evidence="11">
    <location>
        <begin position="7793"/>
        <end position="7804"/>
    </location>
</feature>
<feature type="compositionally biased region" description="Basic and acidic residues" evidence="11">
    <location>
        <begin position="7941"/>
        <end position="7952"/>
    </location>
</feature>
<feature type="compositionally biased region" description="Polar residues" evidence="11">
    <location>
        <begin position="7986"/>
        <end position="7996"/>
    </location>
</feature>
<feature type="compositionally biased region" description="Low complexity" evidence="11">
    <location>
        <begin position="8000"/>
        <end position="8014"/>
    </location>
</feature>
<feature type="compositionally biased region" description="Low complexity" evidence="11">
    <location>
        <begin position="8053"/>
        <end position="8073"/>
    </location>
</feature>
<feature type="active site" description="Proton acceptor" evidence="1">
    <location>
        <position position="7535"/>
    </location>
</feature>
<feature type="active site" description="Proton acceptor" evidence="1">
    <location>
        <position position="8709"/>
    </location>
</feature>
<feature type="binding site" evidence="2">
    <location>
        <position position="6924"/>
    </location>
    <ligand>
        <name>a 1,2-diacyl-sn-glycero-3-phospho-(1D-myo-inositol-4,5-bisphosphate)</name>
        <dbReference type="ChEBI" id="CHEBI:58456"/>
    </ligand>
</feature>
<feature type="binding site" evidence="2">
    <location>
        <position position="6929"/>
    </location>
    <ligand>
        <name>a 1,2-diacyl-sn-glycero-3-phospho-(1D-myo-inositol-3,4-bisphosphate)</name>
        <dbReference type="ChEBI" id="CHEBI:57658"/>
    </ligand>
</feature>
<feature type="binding site" evidence="1 8">
    <location>
        <begin position="7422"/>
        <end position="7430"/>
    </location>
    <ligand>
        <name>ATP</name>
        <dbReference type="ChEBI" id="CHEBI:30616"/>
    </ligand>
</feature>
<feature type="binding site" evidence="8">
    <location>
        <position position="7445"/>
    </location>
    <ligand>
        <name>ATP</name>
        <dbReference type="ChEBI" id="CHEBI:30616"/>
    </ligand>
</feature>
<feature type="binding site" evidence="1 8">
    <location>
        <begin position="8596"/>
        <end position="8604"/>
    </location>
    <ligand>
        <name>ATP</name>
        <dbReference type="ChEBI" id="CHEBI:30616"/>
    </ligand>
</feature>
<feature type="binding site" evidence="8">
    <location>
        <position position="8619"/>
    </location>
    <ligand>
        <name>ATP</name>
        <dbReference type="ChEBI" id="CHEBI:30616"/>
    </ligand>
</feature>
<feature type="modified residue" description="Phosphoserine" evidence="21">
    <location>
        <position position="393"/>
    </location>
</feature>
<feature type="modified residue" description="Phosphoserine" evidence="21">
    <location>
        <position position="3321"/>
    </location>
</feature>
<feature type="modified residue" description="Phosphoserine" evidence="21">
    <location>
        <position position="3802"/>
    </location>
</feature>
<feature type="modified residue" description="Phosphoserine" evidence="21">
    <location>
        <position position="4960"/>
    </location>
</feature>
<feature type="modified residue" description="Phosphoserine" evidence="21">
    <location>
        <position position="5699"/>
    </location>
</feature>
<feature type="modified residue" description="Phosphothreonine" evidence="21">
    <location>
        <position position="5703"/>
    </location>
</feature>
<feature type="modified residue" description="Phosphoserine" evidence="21">
    <location>
        <position position="5706"/>
    </location>
</feature>
<feature type="modified residue" description="Phosphothreonine" evidence="21">
    <location>
        <position position="5737"/>
    </location>
</feature>
<feature type="modified residue" description="Phosphoserine" evidence="21">
    <location>
        <position position="5754"/>
    </location>
</feature>
<feature type="modified residue" description="Phosphoserine" evidence="21">
    <location>
        <position position="6512"/>
    </location>
</feature>
<feature type="modified residue" description="Phosphothreonine" evidence="21">
    <location>
        <position position="6518"/>
    </location>
</feature>
<feature type="modified residue" description="Phosphoserine" evidence="21">
    <location>
        <position position="6520"/>
    </location>
</feature>
<feature type="modified residue" description="Phosphoserine" evidence="21">
    <location>
        <position position="6522"/>
    </location>
</feature>
<feature type="modified residue" description="Phosphoserine" evidence="2">
    <location>
        <position position="7779"/>
    </location>
</feature>
<feature type="modified residue" description="Phosphoserine" evidence="2">
    <location>
        <position position="8161"/>
    </location>
</feature>
<feature type="disulfide bond" evidence="2 5">
    <location>
        <begin position="30"/>
        <end position="81"/>
    </location>
</feature>
<feature type="disulfide bond" evidence="2 5">
    <location>
        <begin position="257"/>
        <end position="309"/>
    </location>
</feature>
<feature type="disulfide bond" evidence="2 5">
    <location>
        <begin position="352"/>
        <end position="402"/>
    </location>
</feature>
<feature type="disulfide bond" evidence="2 5">
    <location>
        <begin position="885"/>
        <end position="935"/>
    </location>
</feature>
<feature type="disulfide bond" evidence="2 5">
    <location>
        <begin position="977"/>
        <end position="1027"/>
    </location>
</feature>
<feature type="disulfide bond" evidence="2 5">
    <location>
        <begin position="1069"/>
        <end position="1119"/>
    </location>
</feature>
<feature type="disulfide bond" evidence="2 5">
    <location>
        <begin position="1161"/>
        <end position="1211"/>
    </location>
</feature>
<feature type="disulfide bond" evidence="2 5">
    <location>
        <begin position="1253"/>
        <end position="1303"/>
    </location>
</feature>
<feature type="disulfide bond" evidence="2 5">
    <location>
        <begin position="1345"/>
        <end position="1395"/>
    </location>
</feature>
<feature type="disulfide bond" evidence="2 5">
    <location>
        <begin position="1437"/>
        <end position="1487"/>
    </location>
</feature>
<feature type="disulfide bond" evidence="2 5">
    <location>
        <begin position="1529"/>
        <end position="1579"/>
    </location>
</feature>
<feature type="disulfide bond" evidence="2 5">
    <location>
        <begin position="1621"/>
        <end position="1671"/>
    </location>
</feature>
<feature type="disulfide bond" evidence="2 5">
    <location>
        <begin position="1713"/>
        <end position="1763"/>
    </location>
</feature>
<feature type="disulfide bond" evidence="2 5">
    <location>
        <begin position="1805"/>
        <end position="1855"/>
    </location>
</feature>
<feature type="disulfide bond" evidence="2 5">
    <location>
        <begin position="1897"/>
        <end position="1947"/>
    </location>
</feature>
<feature type="disulfide bond" evidence="2 5">
    <location>
        <begin position="1989"/>
        <end position="2039"/>
    </location>
</feature>
<feature type="disulfide bond" evidence="2 5">
    <location>
        <begin position="2081"/>
        <end position="2131"/>
    </location>
</feature>
<feature type="disulfide bond" evidence="2 5">
    <location>
        <begin position="2263"/>
        <end position="2313"/>
    </location>
</feature>
<feature type="disulfide bond" evidence="2 5">
    <location>
        <begin position="2620"/>
        <end position="2669"/>
    </location>
</feature>
<feature type="disulfide bond" evidence="2 5">
    <location>
        <begin position="2743"/>
        <end position="2793"/>
    </location>
</feature>
<feature type="disulfide bond" evidence="2 5">
    <location>
        <begin position="2922"/>
        <end position="2972"/>
    </location>
</feature>
<feature type="disulfide bond" evidence="2 5">
    <location>
        <begin position="3100"/>
        <end position="3150"/>
    </location>
</feature>
<feature type="disulfide bond" evidence="2 5">
    <location>
        <begin position="3280"/>
        <end position="3330"/>
    </location>
</feature>
<feature type="disulfide bond" evidence="2 5">
    <location>
        <begin position="3369"/>
        <end position="3419"/>
    </location>
</feature>
<feature type="disulfide bond" evidence="2 5">
    <location>
        <begin position="3549"/>
        <end position="3599"/>
    </location>
</feature>
<feature type="disulfide bond" evidence="2 5">
    <location>
        <begin position="3638"/>
        <end position="3688"/>
    </location>
</feature>
<feature type="disulfide bond" evidence="2 5">
    <location>
        <begin position="3815"/>
        <end position="3864"/>
    </location>
</feature>
<feature type="disulfide bond" evidence="2 5">
    <location>
        <begin position="3903"/>
        <end position="3952"/>
    </location>
</feature>
<feature type="disulfide bond" evidence="2 5">
    <location>
        <begin position="4064"/>
        <end position="4113"/>
    </location>
</feature>
<feature type="disulfide bond" evidence="2 5">
    <location>
        <begin position="4152"/>
        <end position="4201"/>
    </location>
</feature>
<feature type="disulfide bond" evidence="2 5">
    <location>
        <begin position="4240"/>
        <end position="4289"/>
    </location>
</feature>
<feature type="disulfide bond" evidence="2 5">
    <location>
        <begin position="4328"/>
        <end position="4377"/>
    </location>
</feature>
<feature type="disulfide bond" evidence="2 5">
    <location>
        <begin position="4416"/>
        <end position="4465"/>
    </location>
</feature>
<feature type="disulfide bond" evidence="2 5">
    <location>
        <begin position="4504"/>
        <end position="4553"/>
    </location>
</feature>
<feature type="disulfide bond" evidence="2 5">
    <location>
        <begin position="4592"/>
        <end position="4641"/>
    </location>
</feature>
<feature type="disulfide bond" evidence="2 5">
    <location>
        <begin position="4680"/>
        <end position="4729"/>
    </location>
</feature>
<feature type="disulfide bond" evidence="2 5">
    <location>
        <begin position="4768"/>
        <end position="4817"/>
    </location>
</feature>
<feature type="disulfide bond" evidence="2 5">
    <location>
        <begin position="4856"/>
        <end position="4906"/>
    </location>
</feature>
<feature type="disulfide bond" evidence="2 5">
    <location>
        <begin position="4945"/>
        <end position="4995"/>
    </location>
</feature>
<feature type="disulfide bond" evidence="2 5">
    <location>
        <begin position="5034"/>
        <end position="5086"/>
    </location>
</feature>
<feature type="disulfide bond" evidence="2 5">
    <location>
        <begin position="5590"/>
        <end position="5643"/>
    </location>
</feature>
<feature type="disulfide bond" evidence="2 5">
    <location>
        <begin position="5868"/>
        <end position="5920"/>
    </location>
</feature>
<feature type="disulfide bond" evidence="2 5">
    <location>
        <begin position="6098"/>
        <end position="6150"/>
    </location>
</feature>
<feature type="disulfide bond" evidence="2 5">
    <location>
        <begin position="6984"/>
        <end position="7036"/>
    </location>
</feature>
<feature type="disulfide bond" evidence="2 5">
    <location>
        <begin position="7078"/>
        <end position="7131"/>
    </location>
</feature>
<feature type="disulfide bond" evidence="2 5">
    <location>
        <begin position="8401"/>
        <end position="8453"/>
    </location>
</feature>
<feature type="splice variant" id="VSP_060093" description="In isoform 3 and isoform 2." evidence="16">
    <location>
        <begin position="1"/>
        <end position="6831"/>
    </location>
</feature>
<feature type="splice variant" id="VSP_060094" description="In isoform 3." evidence="16">
    <original>DTSVEGSAHSAQDGADQQAASVLWRLLGSEALGPSPGDLPNTRQSEPPAFEEAASQIPGAASGTPEVSQPGTHKGLEQETTSSGSQGWTVPIRVEGTAWPGAGTGQLLLDVHSQVIMETTQRTYVCQAPDTGVTRAPSMQVTIEDVQVQVGDMAQFDAVIEGHPPPIVTWYKGSTQLTSSARLSQRQDGTTYSLVLTDVAPHDAGVYTCVANNAGGQVLCKAELLVHGGDKLDAENQVYRRKLHSFYDVQEEIGRGVFGFVKRVQHKGNKMFCAAKFIPLRSKTRAQAYQERDILATLGHPLVTGLLDQFETRKTLILILELCSSEELLDRLFKKGVVTEAEVKVYIQQLVEGLHYLHSHGILHLDIKPPNILMVHPAREDIKICDFGFAQKIT</original>
    <variation>VTEQETKVPKKTVIIEETITTVVKSPRGRRQSPGKSPSRSPSRRSASPRRPGLLAPERLYPPGTSPSRRLEVEQGRKAPVPALYVTEAEVHAPASQSQPKWLEVEETIEVRVKKTGSRGASPVREMTSRGEGILFTLPGGIPGRDPNANNSNNKSVYQEARTWGPAVVHVGEPFIFQVDSVGNVDWVAASPEPEQVRASQKEENTERQEGCSDGDENTFLMEEPQDTDSLQGRDPKILTHNGRVLTLADLEDYVPQEGETFGCGDSTPSTPDEPPCEVSVLQREISEPTVGQPVLLNVGRPPGTGATPSFFRPGSQVHSPESVSFLLREAWSGPVSAAPWTSSFHTHVQSSVDGSHGSFKTEVSTQTVSFGAVGETVTLHIDPDGGEAPGPSQG</variation>
    <location>
        <begin position="7170"/>
        <end position="7563"/>
    </location>
</feature>
<feature type="splice variant" id="VSP_060095" description="In isoform 2." evidence="16">
    <original>DTSVEGS</original>
    <variation>ERRPSPP</variation>
    <location>
        <begin position="7170"/>
        <end position="7176"/>
    </location>
</feature>
<feature type="splice variant" id="VSP_060096" description="In isoform 2." evidence="16">
    <location>
        <begin position="7177"/>
        <end position="8886"/>
    </location>
</feature>
<feature type="splice variant" id="VSP_060097" description="In isoform 3." evidence="16">
    <location>
        <begin position="7564"/>
        <end position="8886"/>
    </location>
</feature>
<feature type="sequence conflict" description="In Ref. 3; AAT80900." evidence="18" ref="3">
    <original>R</original>
    <variation>Q</variation>
    <location>
        <position position="7655"/>
    </location>
</feature>
<feature type="sequence conflict" description="In Ref. 3; AAT80900." evidence="18" ref="3">
    <original>G</original>
    <variation>E</variation>
    <location>
        <position position="8513"/>
    </location>
</feature>
<proteinExistence type="evidence at protein level"/>
<sequence>MDHSFSGAPRFLTRPKAFVVSVGKDATLSCQIVGNPTPHVSWEKDRQPVEAGARFRLAQDGDVYRLTILDLALGDSGQYVCRARNAIGEAFAAVGLRVDSEGTCAEQAPHFLLRPTSIRVREGADATFRCRVGGSPQPAVSWSKDGRRLGPPDAPHVRVEEHGESSALRIRSARPRDGGTYEVRAENPLGSASAAAALVVDSDAEVAGPPGTSTATLLAHLQQRREAMRAEGIPPSPPGAGTRTCTVTEGKHARLSCFVTGEPKPETVWKKDGQLVTEGRRHVVYEDEQENFVLKILFCKQSDRGLYTCTASNLVGQTYSSVLVVVREPTVPFKKRLQDLEVREKESATFQCEVAQPATEAAWFKEETRLWASAKYDIEEEGTERRLTVRNVSADDDAVYICETTEGSRTVAELSVQGNLTRKLPRKTAVRTGDTAIFWVELAVPEGPVRWLRNQEEMVAGGRVAITAEGTCHTLTIFQCTLEDMGEVAFVSGGCRTTTQFCVSAPRRPPLYPPADPVVKAKTESSVTLSWSAPPHGDRPVTIDGYVLEKRKLGAYAWSRCHEAGWLATTEFTITGVAEEGDFQFRVSAINHFGQGPYLEFPGTMHLVPMLAVKTPLKAVEAVEGGEVTFSVDLTVASSGEWFLDGEALKASSIYVIRCDRTRHMLTIREVPARLHGAQLKFVANGIETSIQMVVRAALGLPSSKLPAAAAREVLAQLHEEAQLLAELSDQAAAVTWLKDGRELSLGPKYEMQVSAGRRALLVRDVAQDDAGLYECVSRGSRTAYQLLVQDITDGYRDWGPAGPQKHMCKCAGAKIARYLGSSCYRFLQYDKGVWHWLEAALDTRQGKGTSSCSLHEKPKLVFAKGQQAHSEVKAEAGNSATLSCEVTQAQTEVTWFKDGKKLSSSSKVRMEASGCSRRLVVQQAGKADAGEYSCEAGGQKLSFRLDVAEPKLVFAKGQQAHSEVKAEAGASATLSCEVAQAQTEVTWFKDGKKLSSSSKVRMEASGCSRRLVVQQAGKADAGEYSCEAGGQKLSFRLDVAEPKMVFAKEQQARSEVKAEAGASATLSCEVAQAQTEVTWFKDGKKLSSSSKVRMEASGCSRRLVVQQAGKADAGEYSCEAGGQKLSFRLDVTEPKLVFAKEQQARSEVKAEVGNSATLSCEVAQAQTEVTWFKDGKKLSSSSKVRMEASGCSRRLVVQQAGKADAGEYSCEAGGQKLSFRLDVAEPKLVFAKEQQARSEVKAEAGNSATLSCEVAQAQTEVTWFKDGKKLSSSSKVRMEASGCSRRLVVQQAGKADAGEYSCEAGGQKLSFHLDVTEPKLVFAKEQQAHSEVKAEAGASATLSCEVAQAQTEVTWFKDGKKLSSSSKVRMEASGCSRRLVVQQAGKADAGEYSCEAEGQKLSFRLDVAEPKLVFAKEQQARSEVKAEAGASATLSCEVAQAQTEVTWFKDGKKLSSSSKVRVEASGCSRRLVVQQAGKADAGEYSCEAGGQKLSFRLDVAEPKLVFAKEQQANSEVKAEAGASATLSCEVAQAQTEVTWFKDGKKLSSSSKVRVEASGCSRRLVVQQAGKADAGEYSCEAGGQKLSFRLDVAEPKLAFAKEQQAHSEVKAEAGASATLSCEVAQAQTEVTWFKDGKKLSSSSKVRVEASGCSRRLVVQQAGKADAGEYSCEAGGQKLSFRLDVAEPKLAFAKEQQAHSEVKAEAGASATLSCEVAQAQTEVTWFKDGKKLSSSSKVRVEASGCSRRLVVQQAGKADAGEYSCEAGGQKLSFRLDVAEPKLAFAKEQQAHSEVKAEAGASATLSCEVAQAQTEVTWFKDGKKLSSSSKVRVEASGCSRRLVVQQAGKADAGEYSCEAGGQKLFFRLDVAEPKLMFAKEQQAHSEVKAEAGASATLSCEVAQAQTEVTWFKDGKKLSSSSKVRVEASGCSRRLVVQQAGKADAGEYSCEAGGQKLSFRLDVAEPKLVFAKEQQAHSEVKAEAGASATLSCEVAQAQTEVTWFKDGKKLSSSSKVRVEASGCSRRLVVQQVGKADAGEYSCEARGQKLSFRLDVADTRLMFAKEQQARTEVKAEAGNSATLSCEVAQAQTEVTWFKDGKKLSSSSKVRVEASGCSRRLVVQQAGKADAGEYSCEAGGQKLSFRLDVAEAESQIPERPSRREPLVVKEHETIILTATIAAPSVAAVTWLKDGVEIRRSKRHEATSLGDTHTLTVRGAQVLDSAIYSCRVGKEGQDFPVQVEEVAAKFSKPLEPVEGELGGTVMLVCELSPEQAEVVWRCGNTQLRPGKRFQMTSEGPRRTLTVSGLREDDAEEYVCESRDDRTSARLTVKVPRVVKFTSGLSAMVAEEGQEATFQCVVSPSDAGVTWYKDGMQLQPSEKFVMVESGASRSLTILGLTLEDAGQVTVEAEGASSSAALRVREAPVLFKKKLEPQTVEERTSVTLEVELTRPWPEVKWTRNAAVLTPSENVEIRAEGARHCLVLRSVGFADRGFFGCETPDDKTQAKLNVEMRQVRLVRGLQEVEAKEQGTASMDVELSHAEVEGSWTRDGLRLQPGPKCHLAVQGPVHILTLSALQPQDSGLVAFRAEGVHTSARLIVTELPVSFTRVLQDVVATQKEKVTLECELSRPVDVRWLKDGVELRAGKAIGIVAQGTCRSLVIYRCETGDQGVYVCDALDAQTSASLRVQGRTYTLIFRRVLAEDAGEVKFVAENAESRAHLRVKELPVTLLRPLRDKIAMEKHRGVLECQVSRASAQVRWFKGGVELQSGPKYEVVSDGLYRKLVINDVQPEDEDTYTCDAGNVKTSAQFFVEEQSITIVRGLKDMTVMEPAPAWFECETSIPSVRPPKWLLGKTVLQAGGNVGLEQDGTVHRLTLHKTCSTMTGPVHFTIGKSRSSAQLVVSDIPVVLTRPLEPKAGRELQSVVLSCDFRPAPKAVQWYKDDTPLSPSEKFKMALEGQMAELRILRLTPADAGVYRCQAGSAQSSAEVTVEAREVTVIQPLQDAEAMEEGRVCFSCELSHKDEDIEWSLNGTPLYNDSFHEISHEGCLHTLVLKSVRQADTGTVCATSPKVSVSARLVVKGKPVVFLKALDDVSAEERGTLTLQCEVSDPEARVVWRKDGVELGPSDKYDFLHKAGARGLTVHDLSHEDAGLYTCQVGSKETQSKVSVHDLHVGITKRLKTVEVLEGESCSFECVLSHESPSDPAVWTVGGKTVGGSGHFHAVRQGRKYTLTVKDAALSDAGEVVFSVLGLTSKASLIIRERPVDITKPLEDQRTTLGEDVMLSCELSRAGTSVRWLKDGKAIRKSQKYDLLSEGTRAVLVVRKASLKDSGEYTCETEASKSTAKLCVEEKANRFTEELADLQVEEKGRAVFTCKTEHPASVVTWRKGLLELRASGKHVPSQEGLTLKLTINALERTDSDTYTCDIGQARTQARLLVHGQKVRVIEDLEDTAVQEGSSAKFCCRIAPADYGPVHWFLDKTPLHSNELNEITVQPGGYHVLTLRQLALKDSGTVYFEAGDQRTSAALRVTEKPSIFSRPLTDVTVTEGEDLTLVCETTTVDSSVRWTKDGKTLRPSARCQLSHEGCQAQLLITATTPQDGGRYKCEIGGASSSSIVRVHALPVRFRESLKDVEVPEGKAATLRCVLSSVAAPVEWRHGDDVLKSSNKYSLRQEGAVLELVIRDLQPQDSGQYSCSFGDQTTSATLTVKTSSAQFVGKLRNKEATEGTTVTLRCELTKEAPVEWKKGTETLRNGDKYSLKQDGAVCELQICSLLVADAGEYSCVCGQEKTSATLTVKALLVHFVRRLRSKEATEGDTTTLQCELSKAAPVEWRKGTETLRDGDRYSLKQDGAVCELQIRSLTIADAGEYLCTCGQEKTSATLTVRALPAKFKDSLKNEEATEGTTATLSCELSKAAPVTWKKGPKTLQSGDKYVLRQDGAVCGLQIHGLTMADAGEYSCVCGQEKTSATLTVRGLPAKFIEDLRSQEATEGATAILRCELSKAAPVEWRKGSETLKDGDRYTLRQDGAVCELQIRGLAVVDTGTYSSLPTKFTEGLRNEEATEGTMATLRCQMSKAAPVEWRKGSETLRDGDRYSLRQDGAMCELQIRGLTIEDSGEYTCVCGQEKTSATLSVKALPSRFIEDLRSQEATEGTMATLRCQMSKTAPVEWKKGSETLRDGGRYSLRQDGPVCELQICDLAVEDAGEYSCVCGQEKTSATLSIKALPPRFIEDLRSQEATEGTMATLRCQMSKAAPVEWRKGSETLGDGGRYSLRQNGAVCELQIHDLAVEDTGEYSCVCGQEKTSATLNVKALPPRFIEDLRSQEATEGTMATLRCQMSKAAPVEWRKGSETLRDGGRYSLRQDGAVCELQIHDLDVEDAGQYSCVCGQEKTSAVLTVDALPPKFTEGLKKEEATEGTMVTLRCQMSKEATVEWRKGAKTLSDGGRYSLRQDGAMCELQICGLAVEDAGEYSCVCGQEKTSATLSVKALPPRFIEDLRSQEATEGTMATLRCQMSKAAPVEWRKGSETLRDGDRYSLRQDGAVCELQIRDLAVEDAGEYLCVCGQEKTSATLSVKALPPRFIEDLRSQEATEGTMATLRCQMSKAAPVEWRKGSKTLRDGDRYSLRQDGAMCELQICDLAVEDTGDYSCVCGQEKTSATLSVKALPPRFIEDLRSQEAREGTVATLRCRMSKAAPVEWRKGSETLKDGDRYSLRQEGNLCELQIRDLAVEDTEEYSCVCGQEKTSATLSVKALPAKFIEDLRSQEAPESSTVTLRCKLSKKASVVWKKGSETLRNGARYSLRQDGAVCELEIRDLTVEDTGEYSCTCGQERTSATLSIMAPQVVFQQPLQNLQAEEGSMASLRCELSVPNAAMVWSKGGLELQGDTRREARQQGCVAELLLRDLRREDAGEYSCTCGSQTTSATLMVTAAPVRFLRELQAQDVDEGATARLRCELSREAVSVEWRKGSLQLFPCAKYQMVQEGTTAELLVHGVEQEDAGEYTCDAGHTQSIARLSVRAPKPKFKTDLQSTEQEAGGTARLCCQLSEAEPGTPVQWLKEGVELHVGSKYEMRRQGAVCELLIHGLEAKDTGEYACLVGGQKTLASLRVKEPEVTIVRGLVDMEVQADEDVEFTCKVSQAGATDVQWHLQGLPLQSNEVTEVAVLADGCTHVLQLKGVTLEDAGTVSFHVGGLSSSAQLTVRVPEVTVLEPLKDVQLSEGQDAHFRCRLSRASGQEARWALGGVPLQCNEMNDITVEQGTLYLLTLHKVTLEDAGTITLQVGSCSSEAQLKVTAKNTVLRGLENVDALEGGEALFECQLSQPEVAAHTWLLDDEPVHTSEKVEVVYFENGLRHLLLLKNLKPQDSCRVTFLAGDVVTSAFLTVRGWRLEVLEPPHDASVKAGMQVRFTCILSEAVPVGEATWYINGAAIQPDDTDWTVTTDGSHHALTLSNAQPQHAGEVTFAARDAVASARLSVLALPDPPEDAEVVGRSDHSVTLSWVAPMSDGGGGLCGYRVEMKEASTGQWQLCHDLVPGPECVVDDLVPGKTYRFRVAAVGPAGAGEPVHLPQMVKIAPAPAPAPAPAPAPAPETRQAVVGEDICLELEVAADGGEVVWHKGTERIQPGGHFEVLSRGQRQMLVIKGFRTEDQGEYRCGPIQGLPSSGAATFNVVMTSGSGDEVPAQPSLPPEAAQEGDLHLLWEALARKRRMSREPTLDSISELPEEDSRVQHLRQEAEETAPDLSEGYSTADELARTGEADLSHTSSDDESRAGTPSLVTYLKKAGGPGISPLASKHEAQVTTSVKPQKQQEPVVPTCPPPGDLSAADLMDPSLDKAAVKIQAAFKGYKVRKEMKQQEGPVFSRTFGDTEAQVGDVLRLECVLATKTDMRACWLKDGIELTDGRHYHIDQLKDGTCSLLVTGLAPTDSGRYTCQVSTKSGRVSHSACVVVSGTESEAESSSGGELDDAFRRAARRLHRLFRTKSPAELSEEELFLSADEGPGEPEEPADWQTYREDENFVCIRFESLAEARQAVTCFRNMFATMGIGVEISLGEQGPRGVEMRIGKVAPTVTPAVPLAKTPGLQTSDAAPVFLTELQNQDVQDGYPMSFDCVVTGQPVPSVRWFKDGKLLEEDDHYMINEDQQGGHQLIITAVVPADMGVYRCLAENSMGVSSTKAELRVELTSTDYDTAADATETSSYFSAQGYLSSREQEGTESDEGQLPQVLEELKDLQVAPGTRLAKFQLKVKGYPAPKLYWFKDGQPLTTSDHIRMTDKKTLHTLEIVSVTREDSGQYAAYISNAVGAAYSSARLLVRGPSEPEEKPASDVHERLVPPRILEKFTPKKVKRGSSITFSVKVEGHPAPSVHWLKEEAEKGVLWIGPDTPGYTMASSSKQHSLVLLDVGRQHQGTYTCIATNPAGQALCSASLHISGLAKEEEQERVKEALISSFLQGTSQAVSAQMSESAGFADLVGQSKGESLVAEEAHSHLSLAEVGTEEFLQKLTSQITEMVSAKISQAKLQVPGGDSDEETKTPSASPRHGRSRPSSSVQESSSESEDGDSRGEIFDIYVVTADYLPLGAEQDAIILREGQYVEVLDSAHPLRWLVRTKPTKSSPSRQGWVSPAYLDKRLKLSPEWGPTEAPEFPGEAVSEDEYRTRLSSVIQELLSSEQAFVGELQFLESHHMKHLERSPRVPAAVASQKTVIFRNVQDISHFHSSFLKELQGCGTDDDVAMCFIKNQEAFEKYLEFLVGRVQAESVVVSTPVQEFYKKYAEETLSAKDPTQPPPPPLQHYLEQPVERVQKYQALLKELIRNKARNRQNCALLEQAYAVVSALPQRAENKLHVSLMENYPGTLEALGEPIRQGHFIVWEGAPGARMPWKGHNRHVFLFRNYLVICKPRRDSRTDTFSYVFRNMMKLSSIDLNDQVEGDDRAFEVWHEREDSVRKYLLQARTVIIKNSWVKEICGIQQRLAQPVWRPPEFEEELADCTAELGETVKLACRVTGTPKPIVSWYKDGKPVEVDPHHILIEDPDGSCTLILDNLTGIDSGQYMCFAASAAGNASTLGKILVQVPPRFVNKVRATPFVEGEDAQITCTVEGAPYPQIRWYKDGTLLAPGNRYRMLNEPRSGVLVLVIQAASKEDLGHYECELVNRLGSTRGGGELYMQSPALRARDQHHREQIVAAVEDTSVEGSAHSAQDGADQQAASVLWRLLGSEALGPSPGDLPNTRQSEPPAFEEAASQIPGAASGTPEVSQPGTHKGLEQETTSSGSQGWTVPIRVEGTAWPGAGTGQLLLDVHSQVIMETTQRTYVCQAPDTGVTRAPSMQVTIEDVQVQVGDMAQFDAVIEGHPPPIVTWYKGSTQLTSSARLSQRQDGTTYSLVLTDVAPHDAGVYTCVANNAGGQVLCKAELLVHGGDKLDAENQVYRRKLHSFYDVQEEIGRGVFGFVKRVQHKGNKMFCAAKFIPLRSKTRAQAYQERDILATLGHPLVTGLLDQFETRKTLILILELCSSEELLDRLFKKGVVTEAEVKVYIQQLVEGLHYLHSHGILHLDIKPPNILMVHPAREDIKICDFGFAQKITPSEPQYSKYGSPEFVSPEIIEQNPVSEGSDIWAMGVISYLSLTCSSPFAGESDRATLLNVLEGRVSWSSPTAAHLSEDAKDFIKATLQRTPRARPSTSQCLAHPWFLKSMPAEEAHFINTKQLKFLLARSRWQRSLMSYKSILVMRSIPELLQGPPDSPSLGVARHLRGEASGASSSSSSSDNELAPFARAKSLPPSPVTHSPLLHPRGFLRPSASLPEETEASMPTADAAVPASPQSAGPPASPGCVPRHSVISSLFYQQAGEGAERGNKTSGAKRHPARRRHLLKGGYIARALPGLREPLMEYSLLEEEAAREEQASLMTKTPSFETALRLPSSSVREVPGRSHSLDNPPVTTGPSPEACKEQLLFPPSTGLTHETTAKDRGHKEGFLQESVPFPPMSGDSRPGKQEGSSQDSCRGKPASSCHSELGSGSQEGCGPPSSQSLGSLPPQSLKKELSTSCGPLFSEQPQAAPFPTQVSPLLGSEKEPQDGSLSEGPVPVPSSSPGSASQVDASLDTEGLSEAGDTCDFTPPPQRPQEQATTRKFSLESRGGYAGVAGYGTFAFGGDAGGMLGQGPLWARMAWAVSQSSEEQDEAATESPQPLESLGPIAEASGVPLRTSPSLTPWEEVEQVSLVQIRDLSGDAEAADTISLDISEVDPAYLNLSDLYDIKYLPFEFMIFRRVPKPIEQPESPGSETEAGQGLADFLEEAAWPWPGELGLRAGLEITEEPEEPGDLEALLGEAAVGRKRKWSPSRGLFQFPGRCLSGEEPVELGLRQRVKASMAHISRILKGRPEGPEREGPPRKKAGLASFRLSGLKGRDQELSDEAVVLGQSVTLACQVLAQPTAQATWSKDGVLLESSGHLLISSTLKNFQLLTILVVKEEDLGTYTCCVSNPLGTAVTTGVLRKAERPSSSPRPEVGELYKDAVLLVWKPVESCGPVTYIVQCCIEGGSWTTLASDISDCCYLTGKLSRGGMYIFRTACVSKAGMGPYSSPSEQVLLGGPNHLASEEESSRGRPAQLLPSTKTFAFQMQIRRGRFSVVRQCREKASGRALAAKIVPYQPEDKTAVLREYEALKRLHHPHLAQLHAAYLSPRHLVLILELCSGPELLPSLAERESYSESDVKDYLWQMLSATQYLHAQHILHLDLRSENMMVTEYNLLKVIDLGNAQSLDQEKVPAPENFKDYLETMAPELLEGQGAVPQTDIWAIGVTAFIMLSGEYPESSEGTRDLQKGLRKGLIRLSRCYAGLSGGAVAFLQSSLCAQPWGRPCASTCLQCGWLTEEGPTGSRPTPVTFPTVRLRAFVREREKRRALLYKKHNLAQVR</sequence>
<accession>A2AAJ9</accession>
<accession>A2AB85</accession>
<accession>B2FDE7</accession>
<accession>Q695L2</accession>
<accession>Q811H7</accession>
<evidence type="ECO:0000250" key="1">
    <source>
        <dbReference type="UniProtKB" id="P28523"/>
    </source>
</evidence>
<evidence type="ECO:0000250" key="2">
    <source>
        <dbReference type="UniProtKB" id="Q5VST9"/>
    </source>
</evidence>
<evidence type="ECO:0000255" key="3"/>
<evidence type="ECO:0000255" key="4">
    <source>
        <dbReference type="PROSITE-ProRule" id="PRU00062"/>
    </source>
</evidence>
<evidence type="ECO:0000255" key="5">
    <source>
        <dbReference type="PROSITE-ProRule" id="PRU00114"/>
    </source>
</evidence>
<evidence type="ECO:0000255" key="6">
    <source>
        <dbReference type="PROSITE-ProRule" id="PRU00116"/>
    </source>
</evidence>
<evidence type="ECO:0000255" key="7">
    <source>
        <dbReference type="PROSITE-ProRule" id="PRU00145"/>
    </source>
</evidence>
<evidence type="ECO:0000255" key="8">
    <source>
        <dbReference type="PROSITE-ProRule" id="PRU00159"/>
    </source>
</evidence>
<evidence type="ECO:0000255" key="9">
    <source>
        <dbReference type="PROSITE-ProRule" id="PRU00192"/>
    </source>
</evidence>
<evidence type="ECO:0000255" key="10">
    <source>
        <dbReference type="PROSITE-ProRule" id="PRU00316"/>
    </source>
</evidence>
<evidence type="ECO:0000256" key="11">
    <source>
        <dbReference type="SAM" id="MobiDB-lite"/>
    </source>
</evidence>
<evidence type="ECO:0000269" key="12">
    <source>
    </source>
</evidence>
<evidence type="ECO:0000269" key="13">
    <source>
    </source>
</evidence>
<evidence type="ECO:0000269" key="14">
    <source>
    </source>
</evidence>
<evidence type="ECO:0000269" key="15">
    <source>
    </source>
</evidence>
<evidence type="ECO:0000303" key="16">
    <source>
    </source>
</evidence>
<evidence type="ECO:0000303" key="17">
    <source>
    </source>
</evidence>
<evidence type="ECO:0000305" key="18"/>
<evidence type="ECO:0000312" key="19">
    <source>
        <dbReference type="EMBL" id="AAT80900.1"/>
    </source>
</evidence>
<evidence type="ECO:0000312" key="20">
    <source>
        <dbReference type="MGI" id="MGI:2681862"/>
    </source>
</evidence>
<evidence type="ECO:0007744" key="21">
    <source>
    </source>
</evidence>
<reference key="1">
    <citation type="journal article" date="2009" name="PLoS Biol.">
        <title>Lineage-specific biology revealed by a finished genome assembly of the mouse.</title>
        <authorList>
            <person name="Church D.M."/>
            <person name="Goodstadt L."/>
            <person name="Hillier L.W."/>
            <person name="Zody M.C."/>
            <person name="Goldstein S."/>
            <person name="She X."/>
            <person name="Bult C.J."/>
            <person name="Agarwala R."/>
            <person name="Cherry J.L."/>
            <person name="DiCuccio M."/>
            <person name="Hlavina W."/>
            <person name="Kapustin Y."/>
            <person name="Meric P."/>
            <person name="Maglott D."/>
            <person name="Birtle Z."/>
            <person name="Marques A.C."/>
            <person name="Graves T."/>
            <person name="Zhou S."/>
            <person name="Teague B."/>
            <person name="Potamousis K."/>
            <person name="Churas C."/>
            <person name="Place M."/>
            <person name="Herschleb J."/>
            <person name="Runnheim R."/>
            <person name="Forrest D."/>
            <person name="Amos-Landgraf J."/>
            <person name="Schwartz D.C."/>
            <person name="Cheng Z."/>
            <person name="Lindblad-Toh K."/>
            <person name="Eichler E.E."/>
            <person name="Ponting C.P."/>
        </authorList>
    </citation>
    <scope>NUCLEOTIDE SEQUENCE [LARGE SCALE GENOMIC DNA]</scope>
    <source>
        <strain>C57BL/6J</strain>
    </source>
</reference>
<reference evidence="18" key="2">
    <citation type="journal article" date="2004" name="Genome Res.">
        <title>The status, quality, and expansion of the NIH full-length cDNA project: the Mammalian Gene Collection (MGC).</title>
        <authorList>
            <consortium name="The MGC Project Team"/>
        </authorList>
    </citation>
    <scope>NUCLEOTIDE SEQUENCE [LARGE SCALE MRNA] (ISOFORMS 2 AND 3)</scope>
    <source>
        <strain>C57BL/6J</strain>
        <strain>FVB/N</strain>
        <tissue>Brain</tissue>
        <tissue>Salivary gland</tissue>
    </source>
</reference>
<reference evidence="18 19" key="3">
    <citation type="journal article" date="2004" name="Dev. Genes Evol.">
        <title>Orthologous relationship of obscurin and Unc-89: phylogeny of a novel family of tandem myosin light chain kinases.</title>
        <authorList>
            <person name="Sutter S.B."/>
            <person name="Raeker M.O."/>
            <person name="Borisov A.B."/>
            <person name="Russell M.W."/>
        </authorList>
    </citation>
    <scope>NUCLEOTIDE SEQUENCE [MRNA] OF 7308-8886 (ISOFORM 1)</scope>
</reference>
<reference evidence="18" key="4">
    <citation type="journal article" date="2004" name="Proc. Natl. Acad. Sci. U.S.A.">
        <title>The mouse kinome: discovery and comparative genomics of all mouse protein kinases.</title>
        <authorList>
            <person name="Caenepeel S."/>
            <person name="Charydczak G."/>
            <person name="Sudarsanam S."/>
            <person name="Hunter T."/>
            <person name="Manning G."/>
        </authorList>
    </citation>
    <scope>IDENTIFICATION</scope>
</reference>
<reference key="5">
    <citation type="journal article" date="2010" name="Cell">
        <title>A tissue-specific atlas of mouse protein phosphorylation and expression.</title>
        <authorList>
            <person name="Huttlin E.L."/>
            <person name="Jedrychowski M.P."/>
            <person name="Elias J.E."/>
            <person name="Goswami T."/>
            <person name="Rad R."/>
            <person name="Beausoleil S.A."/>
            <person name="Villen J."/>
            <person name="Haas W."/>
            <person name="Sowa M.E."/>
            <person name="Gygi S.P."/>
        </authorList>
    </citation>
    <scope>PHOSPHORYLATION [LARGE SCALE ANALYSIS] AT SER-393; SER-3321; SER-3802; SER-4960; SER-5699; THR-5703; SER-5706; THR-5737; SER-5754; SER-6512; THR-6518; SER-6520 AND SER-6522</scope>
    <scope>IDENTIFICATION BY MASS SPECTROMETRY [LARGE SCALE ANALYSIS]</scope>
    <source>
        <tissue>Brown adipose tissue</tissue>
        <tissue>Heart</tissue>
        <tissue>Lung</tissue>
        <tissue>Testis</tissue>
    </source>
</reference>
<reference key="6">
    <citation type="journal article" date="2013" name="FASEB J.">
        <title>The kinase domains of obscurin interact with intercellular adhesion proteins.</title>
        <authorList>
            <person name="Hu L.Y."/>
            <person name="Kontrogianni-Konstantopoulos A."/>
        </authorList>
    </citation>
    <scope>ALTERNATIVE SPLICING</scope>
    <scope>FUNCTION</scope>
    <scope>CATALYTIC ACTIVITY</scope>
    <scope>COFACTOR</scope>
    <scope>INTERACTION WITH CDH2 AND ATP1B1</scope>
    <scope>SUBCELLULAR LOCATION</scope>
    <scope>TISSUE SPECIFICITY</scope>
    <scope>PHOSPHORYLATION</scope>
    <scope>GLYCOSYLATION</scope>
</reference>
<reference key="7">
    <citation type="journal article" date="2017" name="J. Mol. Cell. Cardiol.">
        <title>Novel obscurins mediate cardiomyocyte adhesion and size via the PI3K/AKT/mTOR signaling pathway.</title>
        <authorList>
            <person name="Ackermann M.A."/>
            <person name="King B."/>
            <person name="Lieberman N.A.P."/>
            <person name="Bobbili P.J."/>
            <person name="Rudloff M."/>
            <person name="Berndsen C.E."/>
            <person name="Wright N.T."/>
            <person name="Hecker P.A."/>
            <person name="Kontrogianni-Konstantopoulos A."/>
        </authorList>
    </citation>
    <scope>ALTERNATIVE SPLICING (ISOFORMS 2 AND 3)</scope>
    <scope>FUNCTION (ISOFORMS 2 AND 3)</scope>
    <scope>SUBCELLULAR LOCATION (ISOFORMS 2 AND 3)</scope>
    <scope>TISSUE SPECIFICITY (ISOFORMS 2 AND 3)</scope>
    <scope>DEVELOPMENTAL STAGE (ISOFORMS 2 AND 3)</scope>
    <scope>IDENTIFICATION IN A COMPLEX WITH DSG2; DESM; GJA1; CDH2; ANK3 AND VCL (ISOFORMS 2 AND 3)</scope>
</reference>
<protein>
    <recommendedName>
        <fullName>Obscurin</fullName>
        <ecNumber evidence="14">2.7.11.1</ecNumber>
    </recommendedName>
    <alternativeName>
        <fullName>Obscurin-RhoGEF</fullName>
    </alternativeName>
    <alternativeName>
        <fullName>Obscurin-myosin light chain kinase</fullName>
        <shortName>Obscurin-MLCK</shortName>
    </alternativeName>
</protein>
<organism>
    <name type="scientific">Mus musculus</name>
    <name type="common">Mouse</name>
    <dbReference type="NCBI Taxonomy" id="10090"/>
    <lineage>
        <taxon>Eukaryota</taxon>
        <taxon>Metazoa</taxon>
        <taxon>Chordata</taxon>
        <taxon>Craniata</taxon>
        <taxon>Vertebrata</taxon>
        <taxon>Euteleostomi</taxon>
        <taxon>Mammalia</taxon>
        <taxon>Eutheria</taxon>
        <taxon>Euarchontoglires</taxon>
        <taxon>Glires</taxon>
        <taxon>Rodentia</taxon>
        <taxon>Myomorpha</taxon>
        <taxon>Muroidea</taxon>
        <taxon>Muridae</taxon>
        <taxon>Murinae</taxon>
        <taxon>Mus</taxon>
        <taxon>Mus</taxon>
    </lineage>
</organism>
<name>OBSCN_MOUSE</name>
<keyword id="KW-0025">Alternative splicing</keyword>
<keyword id="KW-0067">ATP-binding</keyword>
<keyword id="KW-0112">Calmodulin-binding</keyword>
<keyword id="KW-1003">Cell membrane</keyword>
<keyword id="KW-0963">Cytoplasm</keyword>
<keyword id="KW-0217">Developmental protein</keyword>
<keyword id="KW-0221">Differentiation</keyword>
<keyword id="KW-1015">Disulfide bond</keyword>
<keyword id="KW-0325">Glycoprotein</keyword>
<keyword id="KW-0393">Immunoglobulin domain</keyword>
<keyword id="KW-0418">Kinase</keyword>
<keyword id="KW-0446">Lipid-binding</keyword>
<keyword id="KW-0460">Magnesium</keyword>
<keyword id="KW-0472">Membrane</keyword>
<keyword id="KW-0479">Metal-binding</keyword>
<keyword id="KW-0514">Muscle protein</keyword>
<keyword id="KW-0547">Nucleotide-binding</keyword>
<keyword id="KW-0539">Nucleus</keyword>
<keyword id="KW-0597">Phosphoprotein</keyword>
<keyword id="KW-1185">Reference proteome</keyword>
<keyword id="KW-0677">Repeat</keyword>
<keyword id="KW-0964">Secreted</keyword>
<keyword id="KW-0723">Serine/threonine-protein kinase</keyword>
<keyword id="KW-0728">SH3 domain</keyword>
<keyword id="KW-0808">Transferase</keyword>
<comment type="function">
    <text evidence="2 14">Structural component of striated muscles which plays a role in myofibrillogenesis. Probably involved in the assembly of myosin into sarcomeric A bands in striated muscle (By similarity). Has serine/threonine protein kinase activity and phosphorylates N-cadherin CDH2 and sodium/potassium-transporting ATPase subunit ATP1B1 (PubMed:23392350). Binds (via the PH domain) strongly to phosphatidylinositol 3,4-bisphosphate (PtdIns(3,4)P2) and phosphatidylinositol 4,5-bisphosphate (PtdIns(4,5)P2), and to a lesser extent to phosphatidylinositol 3-phosphate (PtdIns(3)P), phosphatidylinositol 4-phosphate (PtdIns(4)P), phosphatidylinositol 5-phosphate (PtdIns(5)P) and phosphatidylinositol 3,4,5-trisphosphate (PtdIns(3,4,5)P3) (By similarity).</text>
</comment>
<comment type="function">
    <text evidence="15">Isoform 2 and isoform 3: bind phosphatidylinositol bisphosphates (PIP2s) via their PH domains and negatively regulate the PI3K/AKT/mTOR signaling pathway, thus contributing to the regulation of cardiomyocyte size and adhesion.</text>
</comment>
<comment type="catalytic activity">
    <reaction evidence="14">
        <text>L-seryl-[protein] + ATP = O-phospho-L-seryl-[protein] + ADP + H(+)</text>
        <dbReference type="Rhea" id="RHEA:17989"/>
        <dbReference type="Rhea" id="RHEA-COMP:9863"/>
        <dbReference type="Rhea" id="RHEA-COMP:11604"/>
        <dbReference type="ChEBI" id="CHEBI:15378"/>
        <dbReference type="ChEBI" id="CHEBI:29999"/>
        <dbReference type="ChEBI" id="CHEBI:30616"/>
        <dbReference type="ChEBI" id="CHEBI:83421"/>
        <dbReference type="ChEBI" id="CHEBI:456216"/>
        <dbReference type="EC" id="2.7.11.1"/>
    </reaction>
</comment>
<comment type="catalytic activity">
    <reaction evidence="14">
        <text>L-threonyl-[protein] + ATP = O-phospho-L-threonyl-[protein] + ADP + H(+)</text>
        <dbReference type="Rhea" id="RHEA:46608"/>
        <dbReference type="Rhea" id="RHEA-COMP:11060"/>
        <dbReference type="Rhea" id="RHEA-COMP:11605"/>
        <dbReference type="ChEBI" id="CHEBI:15378"/>
        <dbReference type="ChEBI" id="CHEBI:30013"/>
        <dbReference type="ChEBI" id="CHEBI:30616"/>
        <dbReference type="ChEBI" id="CHEBI:61977"/>
        <dbReference type="ChEBI" id="CHEBI:456216"/>
        <dbReference type="EC" id="2.7.11.1"/>
    </reaction>
</comment>
<comment type="cofactor">
    <cofactor evidence="14">
        <name>Mg(2+)</name>
        <dbReference type="ChEBI" id="CHEBI:18420"/>
    </cofactor>
</comment>
<comment type="subunit">
    <text evidence="14 15">Interacts (via protein kinase domain 1) with CDH2 and (via protein kinase domain 1) with ATP1B1 (PubMed:23392350). Isoform 2 is found in a complex with DSG2, DESM, GJA1, CDH2 and VCL (PubMed:28826662). Isoform 3 is found in a complex with DSG2, DESM, GJA1, CDH2, ANK3 and VCL (PubMed:28826662).</text>
</comment>
<comment type="subcellular location">
    <subcellularLocation>
        <location evidence="14">Cytoplasm</location>
        <location evidence="14">Myofibril</location>
        <location evidence="14">Sarcomere</location>
        <location evidence="14">M line</location>
    </subcellularLocation>
    <subcellularLocation>
        <location evidence="14">Cytoplasm</location>
        <location evidence="14">Myofibril</location>
        <location evidence="14">Sarcomere</location>
        <location evidence="14">Z line</location>
    </subcellularLocation>
    <subcellularLocation>
        <location evidence="14">Cell membrane</location>
        <location evidence="14">Sarcolemma</location>
    </subcellularLocation>
    <subcellularLocation>
        <location evidence="14">Nucleus</location>
    </subcellularLocation>
    <subcellularLocation>
        <location evidence="14">Secreted</location>
    </subcellularLocation>
    <text evidence="14">Colocalizes with CDH2 and ATP1B1 to the sarcolemma and to intercalating disks in cardiac muscles. Colocalizes with ATP1B1 to M line and Z line in cardiac muscles. One or both small isoforms, one probably containing protein kinase domain 2 and partial protein kinase domain 1 and one containing only protein kinase domain 2, localize to the extracellular side of the sarcolemma.</text>
</comment>
<comment type="subcellular location">
    <molecule>Isoform 2</molecule>
    <subcellularLocation>
        <location evidence="15">Cell membrane</location>
    </subcellularLocation>
</comment>
<comment type="subcellular location">
    <molecule>Isoform 3</molecule>
    <subcellularLocation>
        <location evidence="15">Cell membrane</location>
    </subcellularLocation>
</comment>
<comment type="alternative products">
    <event type="alternative splicing"/>
    <isoform>
        <id>A2AAJ9-1</id>
        <name>1</name>
        <sequence type="displayed"/>
    </isoform>
    <isoform>
        <id>A2AAJ9-2</id>
        <name evidence="13">2</name>
        <name evidence="17">obsc-40</name>
        <sequence type="described" ref="VSP_060093 VSP_060095 VSP_060096"/>
    </isoform>
    <isoform>
        <id>A2AAJ9-3</id>
        <name evidence="12">3</name>
        <name evidence="17">obsc-80</name>
        <sequence type="described" ref="VSP_060093 VSP_060094 VSP_060097"/>
    </isoform>
    <text evidence="14">Two additional small isoforms seem to exist.</text>
</comment>
<comment type="tissue specificity">
    <text evidence="14 15">Expressed in skeletal muscles including flexor digitorum brevis (FDB), soleus and tibialis anterior muscles, and to a lesser extent in heart muscles (at protein level) (PubMed:23392350). Isoform 2 and isoform 3 are expressed in the myocardium (at protein level) (PubMed:28826662).</text>
</comment>
<comment type="developmental stage">
    <text evidence="15">Isoform 2 and isoform 3 are expressed during late embryogenesis and throughout postnatal development in the myocardium (at protein level) (PubMed:28826662). Isoform 3 is the predominant form in mid-embryogenesis (11 dpc), and moderately decreases postnatally and in adulthood (at protein level) (PubMed:28826662). Isoform 2 increases significantly as development progresses (at protein evel) (PubMed:28826662).</text>
</comment>
<comment type="PTM">
    <text evidence="14">Autophosphorylated by protein kinase domain 1 and 2.</text>
</comment>
<comment type="PTM">
    <text evidence="14">Two small isoforms, one probably containing protein kinase domain 2 and a partial protein kinase domain 1 and one containing only protein kinase domain 2, are glycosylated.</text>
</comment>
<comment type="miscellaneous">
    <molecule>Isoform 2</molecule>
    <text evidence="18">Lacks the kinase domain.</text>
</comment>
<comment type="similarity">
    <text evidence="18">Belongs to the protein kinase superfamily. CAMK Ser/Thr protein kinase family.</text>
</comment>
<comment type="sequence caution" evidence="18">
    <conflict type="erroneous initiation">
        <sequence resource="EMBL-CDS" id="AAH44882"/>
    </conflict>
    <text>Extended N-terminus.</text>
</comment>